<name>NRPC2_ARATH</name>
<sequence length="1161" mass="130212">MGLDQEDLDLTNDDHFIDKEKLSAPIKSTADKFQLVPEFLKVRGLVKQHLDSFNYFINVGIHKIVKANSRITSTVDPSIYLRFKKVRVGEPSIINVNTVENINPHMCRLADMTYAAPIFVNIEYVHGSHGNKAKSAKDNVIIGRMPIMLRSCRCVLHGKDEEELARLGECPLDPGGYFIIKGTEKVLLIQEQLSKNRIIIDSDKKGNINASVTSSTEMTKSKTVIQMEKEKIYLFLHRFVKKIPIIIVLKAMGMESDQEIVQMVGRDPRFSASLLPSIEECVSEGVNTQKQALDYLEAKVKKISYGTPPEKDGRALSILRDLFLAHVPVPDNNFRQKCFYVGVMLRRMIEAMLNKDAMDDKDYVGNKRLELSGQLISLLFEDLFKTMLSEAIKNVDHILNKPIRASRFDFSQCLNKDSRYSISLGLERTLSTGNFDIKRFRMHRKGMTQVLTRLSFIGSMGFITKISPQFEKSRKVSGPRSLQPSQWGMLCPCDTPEGESCGLVKNLALMTHVTTDEEEGPLVAMCYKLGVTDLEVLSAEELHTPDSFLVILNGLILGKHSRPQYFANSLRRLRRAGKIGEFVSVFTNEKQHCVYVASDVGRVCRPLVIADKGISRVKQHHMKELQDGVRTFDDFIRDGLIEYLDVNEENNALIALYESDGTTELDEGAEAAKADTTHIEIEPFTILGVVAGLIPYPHHNQSPRNTYQCAMGKQAMGNIAYNQLNRMDTLLYLLVYPQRPLLTTRTIELVGYDKLGAGQNATVAVMSFSGYDIEDAIVMNKSSLDRGFGRCIVMKKIVAMSQKYDNCTADRILIPQRTGPDAEKMQILDDDGLATPGEIIRPNDIYINKQVPVDTVTKFTSALSDSQYRPAREYFKGPEGETQVVDRVALCSDKKGQLCIKYIIRHTRRPELGDKFSSRHGQKGVCGIIIQQEDFPFSELGICPDLIMNPHGFPSRMTVGKMIELLGSKAGVSCGRFHYGSAFGERSGHADKVETISATLVEKGFSYSGKDLLYSGISGEPVEAYIFMGPIYYQKLKHMVLDKMHARGSGPRVMMTRQPTEGKSKNGGLRVGEMERDCLIAYGASMLIYERLMISSDPFEVQVCRACGLLGYYNYKLKKAVCTTCKNGDNIATMKLPYACKLLFQELQSMNVVPRLKLTEA</sequence>
<proteinExistence type="evidence at transcript level"/>
<feature type="chain" id="PRO_0000434011" description="DNA-directed RNA polymerase III subunit 2">
    <location>
        <begin position="1"/>
        <end position="1161"/>
    </location>
</feature>
<feature type="zinc finger region" description="C4-type" evidence="3">
    <location>
        <begin position="1104"/>
        <end position="1125"/>
    </location>
</feature>
<evidence type="ECO:0000250" key="1">
    <source>
        <dbReference type="UniProtKB" id="P22276"/>
    </source>
</evidence>
<evidence type="ECO:0000269" key="2">
    <source>
    </source>
</evidence>
<evidence type="ECO:0000305" key="3"/>
<evidence type="ECO:0000312" key="4">
    <source>
        <dbReference type="Araport" id="AT5G45140"/>
    </source>
</evidence>
<evidence type="ECO:0000312" key="5">
    <source>
        <dbReference type="EMBL" id="AED95209.1"/>
    </source>
</evidence>
<evidence type="ECO:0000312" key="6">
    <source>
        <dbReference type="EMBL" id="BAB11387.1"/>
    </source>
</evidence>
<accession>F4KD38</accession>
<accession>Q9FKF1</accession>
<protein>
    <recommendedName>
        <fullName evidence="3">DNA-directed RNA polymerase III subunit 2</fullName>
    </recommendedName>
    <alternativeName>
        <fullName evidence="3">DNA-directed RNA polymerase III subunit RPC2</fullName>
        <shortName evidence="3">DNA polymerase I subunit C2</shortName>
        <ecNumber evidence="3">2.7.7.6</ecNumber>
    </alternativeName>
    <alternativeName>
        <fullName evidence="5">Nuclear RNA polymerase C2</fullName>
    </alternativeName>
</protein>
<keyword id="KW-0240">DNA-directed RNA polymerase</keyword>
<keyword id="KW-0479">Metal-binding</keyword>
<keyword id="KW-0548">Nucleotidyltransferase</keyword>
<keyword id="KW-0539">Nucleus</keyword>
<keyword id="KW-1185">Reference proteome</keyword>
<keyword id="KW-0804">Transcription</keyword>
<keyword id="KW-0808">Transferase</keyword>
<keyword id="KW-0862">Zinc</keyword>
<keyword id="KW-0863">Zinc-finger</keyword>
<dbReference type="EC" id="2.7.7.6" evidence="3"/>
<dbReference type="EMBL" id="AB012240">
    <property type="protein sequence ID" value="BAB11387.1"/>
    <property type="status" value="ALT_SEQ"/>
    <property type="molecule type" value="Genomic_DNA"/>
</dbReference>
<dbReference type="EMBL" id="CP002688">
    <property type="protein sequence ID" value="AED95209.1"/>
    <property type="molecule type" value="Genomic_DNA"/>
</dbReference>
<dbReference type="EMBL" id="CP002688">
    <property type="protein sequence ID" value="ANM70451.1"/>
    <property type="molecule type" value="Genomic_DNA"/>
</dbReference>
<dbReference type="EMBL" id="AY123987">
    <property type="status" value="NOT_ANNOTATED_CDS"/>
    <property type="molecule type" value="mRNA"/>
</dbReference>
<dbReference type="RefSeq" id="NP_001332060.1">
    <property type="nucleotide sequence ID" value="NM_001344590.1"/>
</dbReference>
<dbReference type="RefSeq" id="NP_199327.4">
    <property type="nucleotide sequence ID" value="NM_123882.5"/>
</dbReference>
<dbReference type="SMR" id="F4KD38"/>
<dbReference type="FunCoup" id="F4KD38">
    <property type="interactions" value="4395"/>
</dbReference>
<dbReference type="IntAct" id="F4KD38">
    <property type="interactions" value="1"/>
</dbReference>
<dbReference type="STRING" id="3702.F4KD38"/>
<dbReference type="PaxDb" id="3702-AT5G45140.1"/>
<dbReference type="ProteomicsDB" id="250568"/>
<dbReference type="EnsemblPlants" id="AT5G45140.1">
    <property type="protein sequence ID" value="AT5G45140.1"/>
    <property type="gene ID" value="AT5G45140"/>
</dbReference>
<dbReference type="EnsemblPlants" id="AT5G45140.2">
    <property type="protein sequence ID" value="AT5G45140.2"/>
    <property type="gene ID" value="AT5G45140"/>
</dbReference>
<dbReference type="GeneID" id="834550"/>
<dbReference type="Gramene" id="AT5G45140.1">
    <property type="protein sequence ID" value="AT5G45140.1"/>
    <property type="gene ID" value="AT5G45140"/>
</dbReference>
<dbReference type="Gramene" id="AT5G45140.2">
    <property type="protein sequence ID" value="AT5G45140.2"/>
    <property type="gene ID" value="AT5G45140"/>
</dbReference>
<dbReference type="KEGG" id="ath:AT5G45140"/>
<dbReference type="Araport" id="AT5G45140"/>
<dbReference type="TAIR" id="AT5G45140">
    <property type="gene designation" value="NRPC2"/>
</dbReference>
<dbReference type="eggNOG" id="KOG0215">
    <property type="taxonomic scope" value="Eukaryota"/>
</dbReference>
<dbReference type="HOGENOM" id="CLU_000524_5_1_1"/>
<dbReference type="InParanoid" id="F4KD38"/>
<dbReference type="OMA" id="LAYCSWC"/>
<dbReference type="OrthoDB" id="10248617at2759"/>
<dbReference type="PRO" id="PR:F4KD38"/>
<dbReference type="Proteomes" id="UP000006548">
    <property type="component" value="Chromosome 5"/>
</dbReference>
<dbReference type="ExpressionAtlas" id="F4KD38">
    <property type="expression patterns" value="baseline and differential"/>
</dbReference>
<dbReference type="GO" id="GO:0000428">
    <property type="term" value="C:DNA-directed RNA polymerase complex"/>
    <property type="evidence" value="ECO:0007669"/>
    <property type="project" value="UniProtKB-KW"/>
</dbReference>
<dbReference type="GO" id="GO:0005739">
    <property type="term" value="C:mitochondrion"/>
    <property type="evidence" value="ECO:0007669"/>
    <property type="project" value="GOC"/>
</dbReference>
<dbReference type="GO" id="GO:0005634">
    <property type="term" value="C:nucleus"/>
    <property type="evidence" value="ECO:0007669"/>
    <property type="project" value="UniProtKB-SubCell"/>
</dbReference>
<dbReference type="GO" id="GO:0009536">
    <property type="term" value="C:plastid"/>
    <property type="evidence" value="ECO:0007669"/>
    <property type="project" value="GOC"/>
</dbReference>
<dbReference type="GO" id="GO:0003677">
    <property type="term" value="F:DNA binding"/>
    <property type="evidence" value="ECO:0007669"/>
    <property type="project" value="InterPro"/>
</dbReference>
<dbReference type="GO" id="GO:0003899">
    <property type="term" value="F:DNA-directed RNA polymerase activity"/>
    <property type="evidence" value="ECO:0007669"/>
    <property type="project" value="UniProtKB-EC"/>
</dbReference>
<dbReference type="GO" id="GO:0032549">
    <property type="term" value="F:ribonucleoside binding"/>
    <property type="evidence" value="ECO:0007669"/>
    <property type="project" value="InterPro"/>
</dbReference>
<dbReference type="GO" id="GO:0008270">
    <property type="term" value="F:zinc ion binding"/>
    <property type="evidence" value="ECO:0007669"/>
    <property type="project" value="UniProtKB-KW"/>
</dbReference>
<dbReference type="GO" id="GO:0006351">
    <property type="term" value="P:DNA-templated transcription"/>
    <property type="evidence" value="ECO:0007669"/>
    <property type="project" value="InterPro"/>
</dbReference>
<dbReference type="GO" id="GO:0009561">
    <property type="term" value="P:megagametogenesis"/>
    <property type="evidence" value="ECO:0000315"/>
    <property type="project" value="UniProtKB"/>
</dbReference>
<dbReference type="CDD" id="cd00653">
    <property type="entry name" value="RNA_pol_B_RPB2"/>
    <property type="match status" value="1"/>
</dbReference>
<dbReference type="FunFam" id="2.40.270.10:FF:000006">
    <property type="entry name" value="DNA-directed RNA polymerase subunit beta"/>
    <property type="match status" value="1"/>
</dbReference>
<dbReference type="FunFam" id="2.40.270.10:FF:000011">
    <property type="entry name" value="DNA-directed RNA polymerase subunit beta"/>
    <property type="match status" value="1"/>
</dbReference>
<dbReference type="FunFam" id="3.90.1070.20:FF:000002">
    <property type="entry name" value="DNA-directed RNA polymerase subunit beta"/>
    <property type="match status" value="1"/>
</dbReference>
<dbReference type="FunFam" id="3.90.1100.10:FF:000014">
    <property type="entry name" value="DNA-directed RNA polymerase subunit beta"/>
    <property type="match status" value="1"/>
</dbReference>
<dbReference type="FunFam" id="3.90.1100.10:FF:000021">
    <property type="entry name" value="DNA-directed RNA polymerase subunit beta"/>
    <property type="match status" value="1"/>
</dbReference>
<dbReference type="FunFam" id="3.90.1110.10:FF:000006">
    <property type="entry name" value="DNA-directed RNA polymerase subunit beta"/>
    <property type="match status" value="1"/>
</dbReference>
<dbReference type="FunFam" id="3.90.1800.10:FF:000002">
    <property type="entry name" value="DNA-directed RNA polymerase subunit beta"/>
    <property type="match status" value="1"/>
</dbReference>
<dbReference type="Gene3D" id="2.40.50.150">
    <property type="match status" value="1"/>
</dbReference>
<dbReference type="Gene3D" id="3.90.1070.20">
    <property type="match status" value="1"/>
</dbReference>
<dbReference type="Gene3D" id="3.90.1100.10">
    <property type="match status" value="1"/>
</dbReference>
<dbReference type="Gene3D" id="2.40.270.10">
    <property type="entry name" value="DNA-directed RNA polymerase, subunit 2, domain 6"/>
    <property type="match status" value="1"/>
</dbReference>
<dbReference type="Gene3D" id="3.90.1800.10">
    <property type="entry name" value="RNA polymerase alpha subunit dimerisation domain"/>
    <property type="match status" value="1"/>
</dbReference>
<dbReference type="Gene3D" id="3.90.1110.10">
    <property type="entry name" value="RNA polymerase Rpb2, domain 2"/>
    <property type="match status" value="1"/>
</dbReference>
<dbReference type="InterPro" id="IPR015712">
    <property type="entry name" value="DNA-dir_RNA_pol_su2"/>
</dbReference>
<dbReference type="InterPro" id="IPR007120">
    <property type="entry name" value="DNA-dir_RNAP_su2_dom"/>
</dbReference>
<dbReference type="InterPro" id="IPR037033">
    <property type="entry name" value="DNA-dir_RNAP_su2_hyb_sf"/>
</dbReference>
<dbReference type="InterPro" id="IPR007121">
    <property type="entry name" value="RNA_pol_bsu_CS"/>
</dbReference>
<dbReference type="InterPro" id="IPR007644">
    <property type="entry name" value="RNA_pol_bsu_protrusion"/>
</dbReference>
<dbReference type="InterPro" id="IPR007642">
    <property type="entry name" value="RNA_pol_Rpb2_2"/>
</dbReference>
<dbReference type="InterPro" id="IPR037034">
    <property type="entry name" value="RNA_pol_Rpb2_2_sf"/>
</dbReference>
<dbReference type="InterPro" id="IPR007645">
    <property type="entry name" value="RNA_pol_Rpb2_3"/>
</dbReference>
<dbReference type="InterPro" id="IPR007646">
    <property type="entry name" value="RNA_pol_Rpb2_4"/>
</dbReference>
<dbReference type="InterPro" id="IPR007647">
    <property type="entry name" value="RNA_pol_Rpb2_5"/>
</dbReference>
<dbReference type="InterPro" id="IPR007641">
    <property type="entry name" value="RNA_pol_Rpb2_7"/>
</dbReference>
<dbReference type="InterPro" id="IPR014724">
    <property type="entry name" value="RNA_pol_RPB2_OB-fold"/>
</dbReference>
<dbReference type="PANTHER" id="PTHR20856">
    <property type="entry name" value="DNA-DIRECTED RNA POLYMERASE I SUBUNIT 2"/>
    <property type="match status" value="1"/>
</dbReference>
<dbReference type="Pfam" id="PF04563">
    <property type="entry name" value="RNA_pol_Rpb2_1"/>
    <property type="match status" value="1"/>
</dbReference>
<dbReference type="Pfam" id="PF04561">
    <property type="entry name" value="RNA_pol_Rpb2_2"/>
    <property type="match status" value="1"/>
</dbReference>
<dbReference type="Pfam" id="PF04565">
    <property type="entry name" value="RNA_pol_Rpb2_3"/>
    <property type="match status" value="1"/>
</dbReference>
<dbReference type="Pfam" id="PF04566">
    <property type="entry name" value="RNA_pol_Rpb2_4"/>
    <property type="match status" value="1"/>
</dbReference>
<dbReference type="Pfam" id="PF04567">
    <property type="entry name" value="RNA_pol_Rpb2_5"/>
    <property type="match status" value="1"/>
</dbReference>
<dbReference type="Pfam" id="PF00562">
    <property type="entry name" value="RNA_pol_Rpb2_6"/>
    <property type="match status" value="1"/>
</dbReference>
<dbReference type="Pfam" id="PF04560">
    <property type="entry name" value="RNA_pol_Rpb2_7"/>
    <property type="match status" value="1"/>
</dbReference>
<dbReference type="SUPFAM" id="SSF64484">
    <property type="entry name" value="beta and beta-prime subunits of DNA dependent RNA-polymerase"/>
    <property type="match status" value="1"/>
</dbReference>
<dbReference type="PROSITE" id="PS01166">
    <property type="entry name" value="RNA_POL_BETA"/>
    <property type="match status" value="1"/>
</dbReference>
<organism>
    <name type="scientific">Arabidopsis thaliana</name>
    <name type="common">Mouse-ear cress</name>
    <dbReference type="NCBI Taxonomy" id="3702"/>
    <lineage>
        <taxon>Eukaryota</taxon>
        <taxon>Viridiplantae</taxon>
        <taxon>Streptophyta</taxon>
        <taxon>Embryophyta</taxon>
        <taxon>Tracheophyta</taxon>
        <taxon>Spermatophyta</taxon>
        <taxon>Magnoliopsida</taxon>
        <taxon>eudicotyledons</taxon>
        <taxon>Gunneridae</taxon>
        <taxon>Pentapetalae</taxon>
        <taxon>rosids</taxon>
        <taxon>malvids</taxon>
        <taxon>Brassicales</taxon>
        <taxon>Brassicaceae</taxon>
        <taxon>Camelineae</taxon>
        <taxon>Arabidopsis</taxon>
    </lineage>
</organism>
<comment type="function">
    <text evidence="1">DNA-dependent RNA polymerase catalyzes the transcription of DNA into RNA using the four ribonucleoside triphosphates as substrates. Second largest core component of RNA polymerase III which synthesizes small RNAs, such as 5S rRNA and tRNAs. Proposed to contribute to the polymerase catalytic activity and forms the polymerase active center together with the largest subunit. Pol III is composed of mobile elements and NRPC2 is part of the core element with the central large cleft and probably a clamp element that moves to open and close the cleft.</text>
</comment>
<comment type="function">
    <text evidence="2">Essential for the completion of the three rounds of mitosis in female megaspores required for the development of mature gametophytes (PubMed:18723889).</text>
</comment>
<comment type="catalytic activity">
    <reaction evidence="3">
        <text>RNA(n) + a ribonucleoside 5'-triphosphate = RNA(n+1) + diphosphate</text>
        <dbReference type="Rhea" id="RHEA:21248"/>
        <dbReference type="Rhea" id="RHEA-COMP:14527"/>
        <dbReference type="Rhea" id="RHEA-COMP:17342"/>
        <dbReference type="ChEBI" id="CHEBI:33019"/>
        <dbReference type="ChEBI" id="CHEBI:61557"/>
        <dbReference type="ChEBI" id="CHEBI:140395"/>
        <dbReference type="EC" id="2.7.7.6"/>
    </reaction>
</comment>
<comment type="subunit">
    <text evidence="1">Component of the RNA polymerase III (Pol III) complex consisting of 17 subunits.</text>
</comment>
<comment type="subcellular location">
    <subcellularLocation>
        <location evidence="1">Nucleus</location>
    </subcellularLocation>
</comment>
<comment type="disruption phenotype">
    <text evidence="2">Defect in seed production due to female gametophyte developmental arrest.</text>
</comment>
<comment type="similarity">
    <text evidence="3">Belongs to the RNA polymerase beta chain family.</text>
</comment>
<comment type="sequence caution" evidence="3">
    <conflict type="erroneous gene model prediction">
        <sequence resource="EMBL-CDS" id="BAB11387"/>
    </conflict>
</comment>
<gene>
    <name evidence="5" type="primary">NRPC2</name>
    <name evidence="3" type="synonym">RPC2</name>
    <name evidence="4" type="ordered locus">At5g45140</name>
    <name evidence="6" type="ORF">K18C1.1</name>
</gene>
<reference key="1">
    <citation type="journal article" date="1998" name="DNA Res.">
        <title>Structural analysis of Arabidopsis thaliana chromosome 5. VI. Sequence features of the regions of 1,367,185 bp covered by 19 physically assigned P1 and TAC clones.</title>
        <authorList>
            <person name="Kotani H."/>
            <person name="Nakamura Y."/>
            <person name="Sato S."/>
            <person name="Asamizu E."/>
            <person name="Kaneko T."/>
            <person name="Miyajima N."/>
            <person name="Tabata S."/>
        </authorList>
    </citation>
    <scope>NUCLEOTIDE SEQUENCE [LARGE SCALE GENOMIC DNA]</scope>
    <source>
        <strain>cv. Columbia</strain>
    </source>
</reference>
<reference key="2">
    <citation type="journal article" date="2017" name="Plant J.">
        <title>Araport11: a complete reannotation of the Arabidopsis thaliana reference genome.</title>
        <authorList>
            <person name="Cheng C.Y."/>
            <person name="Krishnakumar V."/>
            <person name="Chan A.P."/>
            <person name="Thibaud-Nissen F."/>
            <person name="Schobel S."/>
            <person name="Town C.D."/>
        </authorList>
    </citation>
    <scope>GENOME REANNOTATION</scope>
    <source>
        <strain>cv. Columbia</strain>
    </source>
</reference>
<reference key="3">
    <citation type="journal article" date="2003" name="Science">
        <title>Empirical analysis of transcriptional activity in the Arabidopsis genome.</title>
        <authorList>
            <person name="Yamada K."/>
            <person name="Lim J."/>
            <person name="Dale J.M."/>
            <person name="Chen H."/>
            <person name="Shinn P."/>
            <person name="Palm C.J."/>
            <person name="Southwick A.M."/>
            <person name="Wu H.C."/>
            <person name="Kim C.J."/>
            <person name="Nguyen M."/>
            <person name="Pham P.K."/>
            <person name="Cheuk R.F."/>
            <person name="Karlin-Newmann G."/>
            <person name="Liu S.X."/>
            <person name="Lam B."/>
            <person name="Sakano H."/>
            <person name="Wu T."/>
            <person name="Yu G."/>
            <person name="Miranda M."/>
            <person name="Quach H.L."/>
            <person name="Tripp M."/>
            <person name="Chang C.H."/>
            <person name="Lee J.M."/>
            <person name="Toriumi M.J."/>
            <person name="Chan M.M."/>
            <person name="Tang C.C."/>
            <person name="Onodera C.S."/>
            <person name="Deng J.M."/>
            <person name="Akiyama K."/>
            <person name="Ansari Y."/>
            <person name="Arakawa T."/>
            <person name="Banh J."/>
            <person name="Banno F."/>
            <person name="Bowser L."/>
            <person name="Brooks S.Y."/>
            <person name="Carninci P."/>
            <person name="Chao Q."/>
            <person name="Choy N."/>
            <person name="Enju A."/>
            <person name="Goldsmith A.D."/>
            <person name="Gurjal M."/>
            <person name="Hansen N.F."/>
            <person name="Hayashizaki Y."/>
            <person name="Johnson-Hopson C."/>
            <person name="Hsuan V.W."/>
            <person name="Iida K."/>
            <person name="Karnes M."/>
            <person name="Khan S."/>
            <person name="Koesema E."/>
            <person name="Ishida J."/>
            <person name="Jiang P.X."/>
            <person name="Jones T."/>
            <person name="Kawai J."/>
            <person name="Kamiya A."/>
            <person name="Meyers C."/>
            <person name="Nakajima M."/>
            <person name="Narusaka M."/>
            <person name="Seki M."/>
            <person name="Sakurai T."/>
            <person name="Satou M."/>
            <person name="Tamse R."/>
            <person name="Vaysberg M."/>
            <person name="Wallender E.K."/>
            <person name="Wong C."/>
            <person name="Yamamura Y."/>
            <person name="Yuan S."/>
            <person name="Shinozaki K."/>
            <person name="Davis R.W."/>
            <person name="Theologis A."/>
            <person name="Ecker J.R."/>
        </authorList>
    </citation>
    <scope>NUCLEOTIDE SEQUENCE [LARGE SCALE MRNA]</scope>
    <source>
        <strain>cv. Columbia</strain>
    </source>
</reference>
<reference key="4">
    <citation type="journal article" date="2008" name="Genetics">
        <title>Sex-biased lethality or transmission of defective transcription machinery in Arabidopsis.</title>
        <authorList>
            <person name="Onodera Y."/>
            <person name="Nakagawa K."/>
            <person name="Haag J.R."/>
            <person name="Pikaard D."/>
            <person name="Mikami T."/>
            <person name="Ream T."/>
            <person name="Ito Y."/>
            <person name="Pikaard C.S."/>
        </authorList>
    </citation>
    <scope>FUNCTION</scope>
    <scope>DISRUPTION PHENOTYPE</scope>
</reference>